<accession>B0TVJ0</accession>
<sequence length="245" mass="27234">MNVTLLIPARYGSSRFPGKPLAPINGKPMIQHVYERAALAKGLKDIYVATDDERIKNAVEGFGGKVVMTGADAASGTDRIDDAITQLGLADDDLVINLQGDQPLIDPISIEQLVSLCERHPGEFDMATLGVEIRDEAQINDPNHVKMVFDNNFNALYFSRATIPFGRESSDYPVYKHLGIYAYTRKFIQTFAKLPLGRLEDLEKLEQLRALEYGYKIKVAISAFDSPEVDTPEDIRICEARLAVD</sequence>
<organism>
    <name type="scientific">Shewanella halifaxensis (strain HAW-EB4)</name>
    <dbReference type="NCBI Taxonomy" id="458817"/>
    <lineage>
        <taxon>Bacteria</taxon>
        <taxon>Pseudomonadati</taxon>
        <taxon>Pseudomonadota</taxon>
        <taxon>Gammaproteobacteria</taxon>
        <taxon>Alteromonadales</taxon>
        <taxon>Shewanellaceae</taxon>
        <taxon>Shewanella</taxon>
    </lineage>
</organism>
<dbReference type="EC" id="2.7.7.90" evidence="1"/>
<dbReference type="EMBL" id="CP000931">
    <property type="protein sequence ID" value="ABZ76875.1"/>
    <property type="molecule type" value="Genomic_DNA"/>
</dbReference>
<dbReference type="RefSeq" id="WP_012277404.1">
    <property type="nucleotide sequence ID" value="NC_010334.1"/>
</dbReference>
<dbReference type="SMR" id="B0TVJ0"/>
<dbReference type="STRING" id="458817.Shal_2316"/>
<dbReference type="KEGG" id="shl:Shal_2316"/>
<dbReference type="eggNOG" id="COG1212">
    <property type="taxonomic scope" value="Bacteria"/>
</dbReference>
<dbReference type="HOGENOM" id="CLU_065038_0_1_6"/>
<dbReference type="OrthoDB" id="9815559at2"/>
<dbReference type="UniPathway" id="UPA00030"/>
<dbReference type="Proteomes" id="UP000001317">
    <property type="component" value="Chromosome"/>
</dbReference>
<dbReference type="GO" id="GO:0005829">
    <property type="term" value="C:cytosol"/>
    <property type="evidence" value="ECO:0007669"/>
    <property type="project" value="TreeGrafter"/>
</dbReference>
<dbReference type="GO" id="GO:0008690">
    <property type="term" value="F:3-deoxy-manno-octulosonate cytidylyltransferase activity"/>
    <property type="evidence" value="ECO:0007669"/>
    <property type="project" value="InterPro"/>
</dbReference>
<dbReference type="GO" id="GO:0009103">
    <property type="term" value="P:lipopolysaccharide biosynthetic process"/>
    <property type="evidence" value="ECO:0007669"/>
    <property type="project" value="UniProtKB-UniRule"/>
</dbReference>
<dbReference type="CDD" id="cd02517">
    <property type="entry name" value="CMP-KDO-Synthetase"/>
    <property type="match status" value="1"/>
</dbReference>
<dbReference type="FunFam" id="3.90.550.10:FF:000011">
    <property type="entry name" value="3-deoxy-manno-octulosonate cytidylyltransferase"/>
    <property type="match status" value="1"/>
</dbReference>
<dbReference type="Gene3D" id="3.90.550.10">
    <property type="entry name" value="Spore Coat Polysaccharide Biosynthesis Protein SpsA, Chain A"/>
    <property type="match status" value="1"/>
</dbReference>
<dbReference type="HAMAP" id="MF_00057">
    <property type="entry name" value="KdsB"/>
    <property type="match status" value="1"/>
</dbReference>
<dbReference type="InterPro" id="IPR003329">
    <property type="entry name" value="Cytidylyl_trans"/>
</dbReference>
<dbReference type="InterPro" id="IPR004528">
    <property type="entry name" value="KdsB"/>
</dbReference>
<dbReference type="InterPro" id="IPR029044">
    <property type="entry name" value="Nucleotide-diphossugar_trans"/>
</dbReference>
<dbReference type="NCBIfam" id="TIGR00466">
    <property type="entry name" value="kdsB"/>
    <property type="match status" value="1"/>
</dbReference>
<dbReference type="NCBIfam" id="NF003950">
    <property type="entry name" value="PRK05450.1-3"/>
    <property type="match status" value="1"/>
</dbReference>
<dbReference type="NCBIfam" id="NF003952">
    <property type="entry name" value="PRK05450.1-5"/>
    <property type="match status" value="1"/>
</dbReference>
<dbReference type="NCBIfam" id="NF009905">
    <property type="entry name" value="PRK13368.1"/>
    <property type="match status" value="1"/>
</dbReference>
<dbReference type="PANTHER" id="PTHR42866">
    <property type="entry name" value="3-DEOXY-MANNO-OCTULOSONATE CYTIDYLYLTRANSFERASE"/>
    <property type="match status" value="1"/>
</dbReference>
<dbReference type="PANTHER" id="PTHR42866:SF2">
    <property type="entry name" value="3-DEOXY-MANNO-OCTULOSONATE CYTIDYLYLTRANSFERASE, MITOCHONDRIAL"/>
    <property type="match status" value="1"/>
</dbReference>
<dbReference type="Pfam" id="PF02348">
    <property type="entry name" value="CTP_transf_3"/>
    <property type="match status" value="1"/>
</dbReference>
<dbReference type="SUPFAM" id="SSF53448">
    <property type="entry name" value="Nucleotide-diphospho-sugar transferases"/>
    <property type="match status" value="1"/>
</dbReference>
<evidence type="ECO:0000255" key="1">
    <source>
        <dbReference type="HAMAP-Rule" id="MF_00057"/>
    </source>
</evidence>
<protein>
    <recommendedName>
        <fullName evidence="1">8-amino-3,8-dideoxy-manno-octulosonate cytidylyltransferase</fullName>
        <ecNumber evidence="1">2.7.7.90</ecNumber>
    </recommendedName>
    <alternativeName>
        <fullName evidence="1">CMP-8-amino-3,8-dideoxy-manno-octulosonate synthase</fullName>
    </alternativeName>
</protein>
<name>KDSB_SHEHH</name>
<feature type="chain" id="PRO_0000370150" description="8-amino-3,8-dideoxy-manno-octulosonate cytidylyltransferase">
    <location>
        <begin position="1"/>
        <end position="245"/>
    </location>
</feature>
<keyword id="KW-0963">Cytoplasm</keyword>
<keyword id="KW-0448">Lipopolysaccharide biosynthesis</keyword>
<keyword id="KW-0548">Nucleotidyltransferase</keyword>
<keyword id="KW-0808">Transferase</keyword>
<reference key="1">
    <citation type="submission" date="2008-01" db="EMBL/GenBank/DDBJ databases">
        <title>Complete sequence of Shewanella halifaxensis HAW-EB4.</title>
        <authorList>
            <consortium name="US DOE Joint Genome Institute"/>
            <person name="Copeland A."/>
            <person name="Lucas S."/>
            <person name="Lapidus A."/>
            <person name="Glavina del Rio T."/>
            <person name="Dalin E."/>
            <person name="Tice H."/>
            <person name="Bruce D."/>
            <person name="Goodwin L."/>
            <person name="Pitluck S."/>
            <person name="Sims D."/>
            <person name="Brettin T."/>
            <person name="Detter J.C."/>
            <person name="Han C."/>
            <person name="Kuske C.R."/>
            <person name="Schmutz J."/>
            <person name="Larimer F."/>
            <person name="Land M."/>
            <person name="Hauser L."/>
            <person name="Kyrpides N."/>
            <person name="Kim E."/>
            <person name="Zhao J.-S."/>
            <person name="Richardson P."/>
        </authorList>
    </citation>
    <scope>NUCLEOTIDE SEQUENCE [LARGE SCALE GENOMIC DNA]</scope>
    <source>
        <strain>HAW-EB4</strain>
    </source>
</reference>
<comment type="function">
    <text evidence="1">Activates KDO8N (a required 8-carbon sugar) for incorporation into bacterial lipopolysaccharide in the Shewanella genus.</text>
</comment>
<comment type="catalytic activity">
    <reaction evidence="1">
        <text>8-amino-3,8-dideoxy-alpha-D-manno-octulosonate + CTP = CMP-8-amino-3,8-dideoxy-alpha-D-manno-oct-2-ulosonate + diphosphate</text>
        <dbReference type="Rhea" id="RHEA:49284"/>
        <dbReference type="ChEBI" id="CHEBI:33019"/>
        <dbReference type="ChEBI" id="CHEBI:37563"/>
        <dbReference type="ChEBI" id="CHEBI:87091"/>
        <dbReference type="ChEBI" id="CHEBI:91089"/>
        <dbReference type="EC" id="2.7.7.90"/>
    </reaction>
</comment>
<comment type="pathway">
    <text evidence="1">Bacterial outer membrane biogenesis; lipopolysaccharide biosynthesis.</text>
</comment>
<comment type="subcellular location">
    <subcellularLocation>
        <location evidence="1">Cytoplasm</location>
    </subcellularLocation>
</comment>
<comment type="similarity">
    <text evidence="1">Belongs to the KdsB family.</text>
</comment>
<gene>
    <name evidence="1" type="primary">kdsB</name>
    <name type="ordered locus">Shal_2316</name>
</gene>
<proteinExistence type="inferred from homology"/>